<dbReference type="EC" id="6.1.1.11" evidence="1"/>
<dbReference type="EMBL" id="AE017261">
    <property type="protein sequence ID" value="AAT43817.1"/>
    <property type="molecule type" value="Genomic_DNA"/>
</dbReference>
<dbReference type="RefSeq" id="WP_011178033.1">
    <property type="nucleotide sequence ID" value="NC_005877.1"/>
</dbReference>
<dbReference type="SMR" id="Q6KZN5"/>
<dbReference type="FunCoup" id="Q6KZN5">
    <property type="interactions" value="227"/>
</dbReference>
<dbReference type="STRING" id="263820.PTO1232"/>
<dbReference type="PaxDb" id="263820-PTO1232"/>
<dbReference type="GeneID" id="2844275"/>
<dbReference type="KEGG" id="pto:PTO1232"/>
<dbReference type="PATRIC" id="fig|263820.9.peg.1280"/>
<dbReference type="eggNOG" id="arCOG00403">
    <property type="taxonomic scope" value="Archaea"/>
</dbReference>
<dbReference type="HOGENOM" id="CLU_023797_0_1_2"/>
<dbReference type="InParanoid" id="Q6KZN5"/>
<dbReference type="OrthoDB" id="35932at2157"/>
<dbReference type="UniPathway" id="UPA00906">
    <property type="reaction ID" value="UER00895"/>
</dbReference>
<dbReference type="Proteomes" id="UP000000438">
    <property type="component" value="Chromosome"/>
</dbReference>
<dbReference type="GO" id="GO:0005737">
    <property type="term" value="C:cytoplasm"/>
    <property type="evidence" value="ECO:0007669"/>
    <property type="project" value="UniProtKB-SubCell"/>
</dbReference>
<dbReference type="GO" id="GO:0005524">
    <property type="term" value="F:ATP binding"/>
    <property type="evidence" value="ECO:0007669"/>
    <property type="project" value="UniProtKB-UniRule"/>
</dbReference>
<dbReference type="GO" id="GO:0004828">
    <property type="term" value="F:serine-tRNA ligase activity"/>
    <property type="evidence" value="ECO:0007669"/>
    <property type="project" value="UniProtKB-UniRule"/>
</dbReference>
<dbReference type="GO" id="GO:0016260">
    <property type="term" value="P:selenocysteine biosynthetic process"/>
    <property type="evidence" value="ECO:0007669"/>
    <property type="project" value="UniProtKB-UniRule"/>
</dbReference>
<dbReference type="GO" id="GO:0006434">
    <property type="term" value="P:seryl-tRNA aminoacylation"/>
    <property type="evidence" value="ECO:0007669"/>
    <property type="project" value="UniProtKB-UniRule"/>
</dbReference>
<dbReference type="CDD" id="cd00770">
    <property type="entry name" value="SerRS_core"/>
    <property type="match status" value="1"/>
</dbReference>
<dbReference type="Gene3D" id="3.30.930.10">
    <property type="entry name" value="Bira Bifunctional Protein, Domain 2"/>
    <property type="match status" value="1"/>
</dbReference>
<dbReference type="Gene3D" id="1.10.287.40">
    <property type="entry name" value="Serine-tRNA synthetase, tRNA binding domain"/>
    <property type="match status" value="1"/>
</dbReference>
<dbReference type="HAMAP" id="MF_00176">
    <property type="entry name" value="Ser_tRNA_synth_type1"/>
    <property type="match status" value="1"/>
</dbReference>
<dbReference type="InterPro" id="IPR002314">
    <property type="entry name" value="aa-tRNA-synt_IIb"/>
</dbReference>
<dbReference type="InterPro" id="IPR006195">
    <property type="entry name" value="aa-tRNA-synth_II"/>
</dbReference>
<dbReference type="InterPro" id="IPR045864">
    <property type="entry name" value="aa-tRNA-synth_II/BPL/LPL"/>
</dbReference>
<dbReference type="InterPro" id="IPR002317">
    <property type="entry name" value="Ser-tRNA-ligase_type_1"/>
</dbReference>
<dbReference type="InterPro" id="IPR015866">
    <property type="entry name" value="Ser-tRNA-synth_1_N"/>
</dbReference>
<dbReference type="InterPro" id="IPR042103">
    <property type="entry name" value="SerRS_1_N_sf"/>
</dbReference>
<dbReference type="InterPro" id="IPR033729">
    <property type="entry name" value="SerRS_core"/>
</dbReference>
<dbReference type="InterPro" id="IPR010978">
    <property type="entry name" value="tRNA-bd_arm"/>
</dbReference>
<dbReference type="NCBIfam" id="TIGR00414">
    <property type="entry name" value="serS"/>
    <property type="match status" value="1"/>
</dbReference>
<dbReference type="PANTHER" id="PTHR11778">
    <property type="entry name" value="SERYL-TRNA SYNTHETASE"/>
    <property type="match status" value="1"/>
</dbReference>
<dbReference type="Pfam" id="PF02403">
    <property type="entry name" value="Seryl_tRNA_N"/>
    <property type="match status" value="1"/>
</dbReference>
<dbReference type="Pfam" id="PF00587">
    <property type="entry name" value="tRNA-synt_2b"/>
    <property type="match status" value="1"/>
</dbReference>
<dbReference type="PIRSF" id="PIRSF001529">
    <property type="entry name" value="Ser-tRNA-synth_IIa"/>
    <property type="match status" value="1"/>
</dbReference>
<dbReference type="PRINTS" id="PR00981">
    <property type="entry name" value="TRNASYNTHSER"/>
</dbReference>
<dbReference type="SUPFAM" id="SSF55681">
    <property type="entry name" value="Class II aaRS and biotin synthetases"/>
    <property type="match status" value="1"/>
</dbReference>
<dbReference type="SUPFAM" id="SSF46589">
    <property type="entry name" value="tRNA-binding arm"/>
    <property type="match status" value="1"/>
</dbReference>
<dbReference type="PROSITE" id="PS50862">
    <property type="entry name" value="AA_TRNA_LIGASE_II"/>
    <property type="match status" value="1"/>
</dbReference>
<keyword id="KW-0030">Aminoacyl-tRNA synthetase</keyword>
<keyword id="KW-0067">ATP-binding</keyword>
<keyword id="KW-0963">Cytoplasm</keyword>
<keyword id="KW-0436">Ligase</keyword>
<keyword id="KW-0547">Nucleotide-binding</keyword>
<keyword id="KW-0648">Protein biosynthesis</keyword>
<reference key="1">
    <citation type="journal article" date="2004" name="Proc. Natl. Acad. Sci. U.S.A.">
        <title>Genome sequence of Picrophilus torridus and its implications for life around pH 0.</title>
        <authorList>
            <person name="Fuetterer O."/>
            <person name="Angelov A."/>
            <person name="Liesegang H."/>
            <person name="Gottschalk G."/>
            <person name="Schleper C."/>
            <person name="Schepers B."/>
            <person name="Dock C."/>
            <person name="Antranikian G."/>
            <person name="Liebl W."/>
        </authorList>
    </citation>
    <scope>NUCLEOTIDE SEQUENCE [LARGE SCALE GENOMIC DNA]</scope>
    <source>
        <strain>ATCC 700027 / DSM 9790 / JCM 10055 / NBRC 100828 / KAW 2/3</strain>
    </source>
</reference>
<accession>Q6KZN5</accession>
<proteinExistence type="inferred from homology"/>
<name>SYS_PICTO</name>
<feature type="chain" id="PRO_0000122178" description="Serine--tRNA ligase">
    <location>
        <begin position="1"/>
        <end position="444"/>
    </location>
</feature>
<feature type="binding site" evidence="1">
    <location>
        <begin position="249"/>
        <end position="251"/>
    </location>
    <ligand>
        <name>L-serine</name>
        <dbReference type="ChEBI" id="CHEBI:33384"/>
    </ligand>
</feature>
<feature type="binding site" evidence="1">
    <location>
        <begin position="280"/>
        <end position="282"/>
    </location>
    <ligand>
        <name>ATP</name>
        <dbReference type="ChEBI" id="CHEBI:30616"/>
    </ligand>
</feature>
<feature type="binding site" evidence="1">
    <location>
        <position position="296"/>
    </location>
    <ligand>
        <name>ATP</name>
        <dbReference type="ChEBI" id="CHEBI:30616"/>
    </ligand>
</feature>
<feature type="binding site" evidence="1">
    <location>
        <position position="303"/>
    </location>
    <ligand>
        <name>L-serine</name>
        <dbReference type="ChEBI" id="CHEBI:33384"/>
    </ligand>
</feature>
<feature type="binding site" evidence="1">
    <location>
        <begin position="367"/>
        <end position="370"/>
    </location>
    <ligand>
        <name>ATP</name>
        <dbReference type="ChEBI" id="CHEBI:30616"/>
    </ligand>
</feature>
<feature type="binding site" evidence="1">
    <location>
        <position position="401"/>
    </location>
    <ligand>
        <name>L-serine</name>
        <dbReference type="ChEBI" id="CHEBI:33384"/>
    </ligand>
</feature>
<protein>
    <recommendedName>
        <fullName evidence="1">Serine--tRNA ligase</fullName>
        <ecNumber evidence="1">6.1.1.11</ecNumber>
    </recommendedName>
    <alternativeName>
        <fullName evidence="1">Seryl-tRNA synthetase</fullName>
        <shortName evidence="1">SerRS</shortName>
    </alternativeName>
    <alternativeName>
        <fullName evidence="1">Seryl-tRNA(Ser/Sec) synthetase</fullName>
    </alternativeName>
</protein>
<gene>
    <name evidence="1" type="primary">serS</name>
    <name type="ordered locus">PTO1232</name>
</gene>
<evidence type="ECO:0000255" key="1">
    <source>
        <dbReference type="HAMAP-Rule" id="MF_00176"/>
    </source>
</evidence>
<sequence>MIDIKLLRLNSEIFYKSCRDRGFDTRILDEFFELDNEWKENLKQLNNIKHDKNSITMEISRRIKSGDDINDLKLKVESLNIDIQRLEGRQNEIDVKRNEILRLIPNLLADDVPRCFGDENNRLVRYYGRARVFSDDVKYFIENSGSGDYEEIDYRPKSHVDLISELNLADIERAGKIAGARFYFLKNRLFKLELALINYAVDFLSQRGYTVLEPPFMINYKSMSGATDIETFKDTLYKIEGDDLYLIATAEHPIASMLQDEILMEDELPIRVSGVSPCFRREAGAHGKDTKGIFRVHQFNKIEQFVFCKPEDSWDFFDELVRNSEDIYKSLKIPYRVVNVCSGELGNLAAKKYDIEAWFPAQGKFREIVSASNDTDYQARSLNIKYRSRDGNRFVHTLNSTAIATERILVAIMENFQDRNGKVIKIPEVLIPYTGFSEIGGDDN</sequence>
<organism>
    <name type="scientific">Picrophilus torridus (strain ATCC 700027 / DSM 9790 / JCM 10055 / NBRC 100828 / KAW 2/3)</name>
    <dbReference type="NCBI Taxonomy" id="1122961"/>
    <lineage>
        <taxon>Archaea</taxon>
        <taxon>Methanobacteriati</taxon>
        <taxon>Thermoplasmatota</taxon>
        <taxon>Thermoplasmata</taxon>
        <taxon>Thermoplasmatales</taxon>
        <taxon>Picrophilaceae</taxon>
        <taxon>Picrophilus</taxon>
    </lineage>
</organism>
<comment type="function">
    <text evidence="1">Catalyzes the attachment of serine to tRNA(Ser). Is also able to aminoacylate tRNA(Sec) with serine, to form the misacylated tRNA L-seryl-tRNA(Sec), which will be further converted into selenocysteinyl-tRNA(Sec).</text>
</comment>
<comment type="catalytic activity">
    <reaction evidence="1">
        <text>tRNA(Ser) + L-serine + ATP = L-seryl-tRNA(Ser) + AMP + diphosphate + H(+)</text>
        <dbReference type="Rhea" id="RHEA:12292"/>
        <dbReference type="Rhea" id="RHEA-COMP:9669"/>
        <dbReference type="Rhea" id="RHEA-COMP:9703"/>
        <dbReference type="ChEBI" id="CHEBI:15378"/>
        <dbReference type="ChEBI" id="CHEBI:30616"/>
        <dbReference type="ChEBI" id="CHEBI:33019"/>
        <dbReference type="ChEBI" id="CHEBI:33384"/>
        <dbReference type="ChEBI" id="CHEBI:78442"/>
        <dbReference type="ChEBI" id="CHEBI:78533"/>
        <dbReference type="ChEBI" id="CHEBI:456215"/>
        <dbReference type="EC" id="6.1.1.11"/>
    </reaction>
</comment>
<comment type="catalytic activity">
    <reaction evidence="1">
        <text>tRNA(Sec) + L-serine + ATP = L-seryl-tRNA(Sec) + AMP + diphosphate + H(+)</text>
        <dbReference type="Rhea" id="RHEA:42580"/>
        <dbReference type="Rhea" id="RHEA-COMP:9742"/>
        <dbReference type="Rhea" id="RHEA-COMP:10128"/>
        <dbReference type="ChEBI" id="CHEBI:15378"/>
        <dbReference type="ChEBI" id="CHEBI:30616"/>
        <dbReference type="ChEBI" id="CHEBI:33019"/>
        <dbReference type="ChEBI" id="CHEBI:33384"/>
        <dbReference type="ChEBI" id="CHEBI:78442"/>
        <dbReference type="ChEBI" id="CHEBI:78533"/>
        <dbReference type="ChEBI" id="CHEBI:456215"/>
        <dbReference type="EC" id="6.1.1.11"/>
    </reaction>
</comment>
<comment type="pathway">
    <text evidence="1">Aminoacyl-tRNA biosynthesis; selenocysteinyl-tRNA(Sec) biosynthesis; L-seryl-tRNA(Sec) from L-serine and tRNA(Sec): step 1/1.</text>
</comment>
<comment type="subunit">
    <text evidence="1">Homodimer. The tRNA molecule binds across the dimer.</text>
</comment>
<comment type="subcellular location">
    <subcellularLocation>
        <location evidence="1">Cytoplasm</location>
    </subcellularLocation>
</comment>
<comment type="domain">
    <text evidence="1">Consists of two distinct domains, a catalytic core and a N-terminal extension that is involved in tRNA binding.</text>
</comment>
<comment type="similarity">
    <text evidence="1">Belongs to the class-II aminoacyl-tRNA synthetase family. Type-1 seryl-tRNA synthetase subfamily.</text>
</comment>